<feature type="chain" id="PRO_0000119973" description="F-box protein pof6">
    <location>
        <begin position="1"/>
        <end position="872"/>
    </location>
</feature>
<feature type="domain" description="F-box">
    <location>
        <begin position="30"/>
        <end position="75"/>
    </location>
</feature>
<feature type="region of interest" description="Disordered" evidence="1">
    <location>
        <begin position="101"/>
        <end position="122"/>
    </location>
</feature>
<feature type="compositionally biased region" description="Basic and acidic residues" evidence="1">
    <location>
        <begin position="113"/>
        <end position="122"/>
    </location>
</feature>
<gene>
    <name type="primary">pof6</name>
    <name type="ORF">SPCC18.04</name>
</gene>
<name>POF6_SCHPO</name>
<keyword id="KW-0131">Cell cycle</keyword>
<keyword id="KW-0132">Cell division</keyword>
<keyword id="KW-0963">Cytoplasm</keyword>
<keyword id="KW-0539">Nucleus</keyword>
<keyword id="KW-1185">Reference proteome</keyword>
<proteinExistence type="evidence at protein level"/>
<sequence>MKPSEAREHAIRKIKEYLERRHKQQFKALFGCLTINIYLKIFTLISTPDLCNCRLVCRKFQQLCDYNSIYVKKLLLMNAWDVTLSRKLYYESQDGMSQANMSSNTSKGFHLQSSDKKYADSDRPKLSSSSLLSLPDQKIPFPVDYSTVQGKQVVLTVLDCVSQRVEFARLDYIKVWRALAPIYRNLAYASNTIDPIAFSAFRTPEEQSKVLKYLIRFGNSYPYGTYRQAMQNAILDMASLFEQACLDEFELGLHSRNLDLLRKFSHVLHDFSGPNAYVSMYLAKQTDFVRSFFHFDPYSLFISNNLEEIHINWNILESVVNDTIKLLESESKFSEATLPEPELVQVPYAKDILGNSLKDYVISICEHIGEEETELFLVFISGFYGLCKKFFSIPNGPALVDTIFQPQIDIFISQELHYFKTVGWSLVDQWDQKLEEKEDATECFFYKNVSQNTAKNNFLETFKNVMLLPVSLFTIPSENNSASNLAEKAIEQKEEEDPELSKLDAARFVPANIYVSKDRLKHLPTTELAAQAAVLDSKLEGISTMFSLELALKIVHLCKVSLARAKVFMGTSVPQDDDIKGLSKDLFVQLLRELGQGHLKHGFDRAIEHLSSFDPRRDFSSNTVEPVVKFLELINVGDMIQQMMDSFFNEEMSPICVKDDMFDPAIAEKKKFEQLLDERAAFGLHKGINVLIEHADFLLETKTPMNLFSDQTIGSITNTIEPTAAAKNVVQFLGFHMRILVGRADHEILDVFYKEVGMRLFDSLTRYIKSHKFSVDGGLKLLSDCNLYYEFIHSLHQSSLLPYFKTLKEIAHLFIIDGKNAEEIGKLATDTSRFSSAFHTEEVYEILHSRIDWLNIKYEVDKVIHGLACCIM</sequence>
<evidence type="ECO:0000256" key="1">
    <source>
        <dbReference type="SAM" id="MobiDB-lite"/>
    </source>
</evidence>
<evidence type="ECO:0000269" key="2">
    <source>
    </source>
</evidence>
<evidence type="ECO:0000269" key="3">
    <source>
    </source>
</evidence>
<evidence type="ECO:0000269" key="4">
    <source>
    </source>
</evidence>
<organism>
    <name type="scientific">Schizosaccharomyces pombe (strain 972 / ATCC 24843)</name>
    <name type="common">Fission yeast</name>
    <dbReference type="NCBI Taxonomy" id="284812"/>
    <lineage>
        <taxon>Eukaryota</taxon>
        <taxon>Fungi</taxon>
        <taxon>Dikarya</taxon>
        <taxon>Ascomycota</taxon>
        <taxon>Taphrinomycotina</taxon>
        <taxon>Schizosaccharomycetes</taxon>
        <taxon>Schizosaccharomycetales</taxon>
        <taxon>Schizosaccharomycetaceae</taxon>
        <taxon>Schizosaccharomyces</taxon>
    </lineage>
</organism>
<reference key="1">
    <citation type="journal article" date="2002" name="Mol. Biol. Cell">
        <title>Fission yeast F-box protein Pof3 is required for genome integrity and telomere function.</title>
        <authorList>
            <person name="Katayama S."/>
            <person name="Kitamura K."/>
            <person name="Lehmann A."/>
            <person name="Nikaido O."/>
            <person name="Toda T."/>
        </authorList>
    </citation>
    <scope>NUCLEOTIDE SEQUENCE [GENOMIC DNA]</scope>
    <source>
        <strain>972 / ATCC 24843</strain>
    </source>
</reference>
<reference key="2">
    <citation type="journal article" date="2002" name="Nature">
        <title>The genome sequence of Schizosaccharomyces pombe.</title>
        <authorList>
            <person name="Wood V."/>
            <person name="Gwilliam R."/>
            <person name="Rajandream M.A."/>
            <person name="Lyne M.H."/>
            <person name="Lyne R."/>
            <person name="Stewart A."/>
            <person name="Sgouros J.G."/>
            <person name="Peat N."/>
            <person name="Hayles J."/>
            <person name="Baker S.G."/>
            <person name="Basham D."/>
            <person name="Bowman S."/>
            <person name="Brooks K."/>
            <person name="Brown D."/>
            <person name="Brown S."/>
            <person name="Chillingworth T."/>
            <person name="Churcher C.M."/>
            <person name="Collins M."/>
            <person name="Connor R."/>
            <person name="Cronin A."/>
            <person name="Davis P."/>
            <person name="Feltwell T."/>
            <person name="Fraser A."/>
            <person name="Gentles S."/>
            <person name="Goble A."/>
            <person name="Hamlin N."/>
            <person name="Harris D.E."/>
            <person name="Hidalgo J."/>
            <person name="Hodgson G."/>
            <person name="Holroyd S."/>
            <person name="Hornsby T."/>
            <person name="Howarth S."/>
            <person name="Huckle E.J."/>
            <person name="Hunt S."/>
            <person name="Jagels K."/>
            <person name="James K.D."/>
            <person name="Jones L."/>
            <person name="Jones M."/>
            <person name="Leather S."/>
            <person name="McDonald S."/>
            <person name="McLean J."/>
            <person name="Mooney P."/>
            <person name="Moule S."/>
            <person name="Mungall K.L."/>
            <person name="Murphy L.D."/>
            <person name="Niblett D."/>
            <person name="Odell C."/>
            <person name="Oliver K."/>
            <person name="O'Neil S."/>
            <person name="Pearson D."/>
            <person name="Quail M.A."/>
            <person name="Rabbinowitsch E."/>
            <person name="Rutherford K.M."/>
            <person name="Rutter S."/>
            <person name="Saunders D."/>
            <person name="Seeger K."/>
            <person name="Sharp S."/>
            <person name="Skelton J."/>
            <person name="Simmonds M.N."/>
            <person name="Squares R."/>
            <person name="Squares S."/>
            <person name="Stevens K."/>
            <person name="Taylor K."/>
            <person name="Taylor R.G."/>
            <person name="Tivey A."/>
            <person name="Walsh S.V."/>
            <person name="Warren T."/>
            <person name="Whitehead S."/>
            <person name="Woodward J.R."/>
            <person name="Volckaert G."/>
            <person name="Aert R."/>
            <person name="Robben J."/>
            <person name="Grymonprez B."/>
            <person name="Weltjens I."/>
            <person name="Vanstreels E."/>
            <person name="Rieger M."/>
            <person name="Schaefer M."/>
            <person name="Mueller-Auer S."/>
            <person name="Gabel C."/>
            <person name="Fuchs M."/>
            <person name="Duesterhoeft A."/>
            <person name="Fritzc C."/>
            <person name="Holzer E."/>
            <person name="Moestl D."/>
            <person name="Hilbert H."/>
            <person name="Borzym K."/>
            <person name="Langer I."/>
            <person name="Beck A."/>
            <person name="Lehrach H."/>
            <person name="Reinhardt R."/>
            <person name="Pohl T.M."/>
            <person name="Eger P."/>
            <person name="Zimmermann W."/>
            <person name="Wedler H."/>
            <person name="Wambutt R."/>
            <person name="Purnelle B."/>
            <person name="Goffeau A."/>
            <person name="Cadieu E."/>
            <person name="Dreano S."/>
            <person name="Gloux S."/>
            <person name="Lelaure V."/>
            <person name="Mottier S."/>
            <person name="Galibert F."/>
            <person name="Aves S.J."/>
            <person name="Xiang Z."/>
            <person name="Hunt C."/>
            <person name="Moore K."/>
            <person name="Hurst S.M."/>
            <person name="Lucas M."/>
            <person name="Rochet M."/>
            <person name="Gaillardin C."/>
            <person name="Tallada V.A."/>
            <person name="Garzon A."/>
            <person name="Thode G."/>
            <person name="Daga R.R."/>
            <person name="Cruzado L."/>
            <person name="Jimenez J."/>
            <person name="Sanchez M."/>
            <person name="del Rey F."/>
            <person name="Benito J."/>
            <person name="Dominguez A."/>
            <person name="Revuelta J.L."/>
            <person name="Moreno S."/>
            <person name="Armstrong J."/>
            <person name="Forsburg S.L."/>
            <person name="Cerutti L."/>
            <person name="Lowe T."/>
            <person name="McCombie W.R."/>
            <person name="Paulsen I."/>
            <person name="Potashkin J."/>
            <person name="Shpakovski G.V."/>
            <person name="Ussery D."/>
            <person name="Barrell B.G."/>
            <person name="Nurse P."/>
        </authorList>
    </citation>
    <scope>NUCLEOTIDE SEQUENCE [LARGE SCALE GENOMIC DNA]</scope>
    <source>
        <strain>972 / ATCC 24843</strain>
    </source>
</reference>
<reference key="3">
    <citation type="journal article" date="2003" name="J. Biol. Chem.">
        <title>Skp1 and the F-box protein Pof6 are essential for cell separation in fission yeast.</title>
        <authorList>
            <person name="Hermand D."/>
            <person name="Bamps S."/>
            <person name="Tafforeau L."/>
            <person name="Vandenhaute J."/>
            <person name="Makela T.P."/>
        </authorList>
    </citation>
    <scope>FUNCTION</scope>
    <scope>INTERACTION WITH SKP1</scope>
    <scope>SUBCELLULAR LOCATION</scope>
</reference>
<reference key="4">
    <citation type="journal article" date="2004" name="Genes Cells">
        <title>Molecular interactions of fission yeast Skp1 and its role in the DNA damage checkpoint.</title>
        <authorList>
            <person name="Lehmann A."/>
            <person name="Katayama S."/>
            <person name="Harrison C."/>
            <person name="Dhut S."/>
            <person name="Kitamura K."/>
            <person name="McDonald N."/>
            <person name="Toda T."/>
        </authorList>
    </citation>
    <scope>INTERACTION WITH SKP1</scope>
</reference>
<reference key="5">
    <citation type="journal article" date="2006" name="Nat. Biotechnol.">
        <title>ORFeome cloning and global analysis of protein localization in the fission yeast Schizosaccharomyces pombe.</title>
        <authorList>
            <person name="Matsuyama A."/>
            <person name="Arai R."/>
            <person name="Yashiroda Y."/>
            <person name="Shirai A."/>
            <person name="Kamata A."/>
            <person name="Sekido S."/>
            <person name="Kobayashi Y."/>
            <person name="Hashimoto A."/>
            <person name="Hamamoto M."/>
            <person name="Hiraoka Y."/>
            <person name="Horinouchi S."/>
            <person name="Yoshida M."/>
        </authorList>
    </citation>
    <scope>SUBCELLULAR LOCATION [LARGE SCALE ANALYSIS]</scope>
</reference>
<reference key="6">
    <citation type="journal article" date="2009" name="Biochem. J.">
        <title>Identification of a conserved F-box protein 6 interactor essential for endocytosis and cytokinesis in fission yeast.</title>
        <authorList>
            <person name="Jourdain I."/>
            <person name="Spielewoy N."/>
            <person name="Thompson J."/>
            <person name="Dhut S."/>
            <person name="Yates J.R."/>
            <person name="Toda T."/>
        </authorList>
    </citation>
    <scope>INTERACTION WITH SIP1 AND SKP1</scope>
</reference>
<dbReference type="EMBL" id="CU329672">
    <property type="protein sequence ID" value="CAA21418.1"/>
    <property type="molecule type" value="Genomic_DNA"/>
</dbReference>
<dbReference type="PIR" id="T41147">
    <property type="entry name" value="T41147"/>
</dbReference>
<dbReference type="RefSeq" id="NP_588383.1">
    <property type="nucleotide sequence ID" value="NM_001023374.2"/>
</dbReference>
<dbReference type="SMR" id="O74854"/>
<dbReference type="BioGRID" id="275890">
    <property type="interactions" value="4"/>
</dbReference>
<dbReference type="FunCoup" id="O74854">
    <property type="interactions" value="40"/>
</dbReference>
<dbReference type="IntAct" id="O74854">
    <property type="interactions" value="1"/>
</dbReference>
<dbReference type="MINT" id="O74854"/>
<dbReference type="STRING" id="284812.O74854"/>
<dbReference type="iPTMnet" id="O74854"/>
<dbReference type="PaxDb" id="4896-SPCC18.04.1"/>
<dbReference type="EnsemblFungi" id="SPCC18.04.1">
    <property type="protein sequence ID" value="SPCC18.04.1:pep"/>
    <property type="gene ID" value="SPCC18.04"/>
</dbReference>
<dbReference type="GeneID" id="2539324"/>
<dbReference type="KEGG" id="spo:2539324"/>
<dbReference type="PomBase" id="SPCC18.04">
    <property type="gene designation" value="pof6"/>
</dbReference>
<dbReference type="VEuPathDB" id="FungiDB:SPCC18.04"/>
<dbReference type="eggNOG" id="KOG3745">
    <property type="taxonomic scope" value="Eukaryota"/>
</dbReference>
<dbReference type="HOGENOM" id="CLU_003875_0_0_1"/>
<dbReference type="InParanoid" id="O74854"/>
<dbReference type="OMA" id="WYQVKRD"/>
<dbReference type="PhylomeDB" id="O74854"/>
<dbReference type="PRO" id="PR:O74854"/>
<dbReference type="Proteomes" id="UP000002485">
    <property type="component" value="Chromosome III"/>
</dbReference>
<dbReference type="GO" id="GO:0032153">
    <property type="term" value="C:cell division site"/>
    <property type="evidence" value="ECO:0000314"/>
    <property type="project" value="PomBase"/>
</dbReference>
<dbReference type="GO" id="GO:0030428">
    <property type="term" value="C:cell septum"/>
    <property type="evidence" value="ECO:0000314"/>
    <property type="project" value="UniProtKB"/>
</dbReference>
<dbReference type="GO" id="GO:0051286">
    <property type="term" value="C:cell tip"/>
    <property type="evidence" value="ECO:0000314"/>
    <property type="project" value="PomBase"/>
</dbReference>
<dbReference type="GO" id="GO:0005737">
    <property type="term" value="C:cytoplasm"/>
    <property type="evidence" value="ECO:0007005"/>
    <property type="project" value="PomBase"/>
</dbReference>
<dbReference type="GO" id="GO:0005829">
    <property type="term" value="C:cytosol"/>
    <property type="evidence" value="ECO:0007005"/>
    <property type="project" value="PomBase"/>
</dbReference>
<dbReference type="GO" id="GO:0000145">
    <property type="term" value="C:exocyst"/>
    <property type="evidence" value="ECO:0000318"/>
    <property type="project" value="GO_Central"/>
</dbReference>
<dbReference type="GO" id="GO:0005634">
    <property type="term" value="C:nucleus"/>
    <property type="evidence" value="ECO:0000314"/>
    <property type="project" value="PomBase"/>
</dbReference>
<dbReference type="GO" id="GO:0000151">
    <property type="term" value="C:ubiquitin ligase complex"/>
    <property type="evidence" value="ECO:0000255"/>
    <property type="project" value="PomBase"/>
</dbReference>
<dbReference type="GO" id="GO:1990756">
    <property type="term" value="F:ubiquitin-like ligase-substrate adaptor activity"/>
    <property type="evidence" value="ECO:0000255"/>
    <property type="project" value="PomBase"/>
</dbReference>
<dbReference type="GO" id="GO:0032456">
    <property type="term" value="P:endocytic recycling"/>
    <property type="evidence" value="ECO:0000266"/>
    <property type="project" value="PomBase"/>
</dbReference>
<dbReference type="GO" id="GO:0006887">
    <property type="term" value="P:exocytosis"/>
    <property type="evidence" value="ECO:0000318"/>
    <property type="project" value="GO_Central"/>
</dbReference>
<dbReference type="GO" id="GO:0006893">
    <property type="term" value="P:Golgi to plasma membrane transport"/>
    <property type="evidence" value="ECO:0000318"/>
    <property type="project" value="GO_Central"/>
</dbReference>
<dbReference type="GO" id="GO:0000920">
    <property type="term" value="P:septum digestion after cytokinesis"/>
    <property type="evidence" value="ECO:0000315"/>
    <property type="project" value="UniProtKB"/>
</dbReference>
<dbReference type="CDD" id="cd22139">
    <property type="entry name" value="F-box_unchar"/>
    <property type="match status" value="1"/>
</dbReference>
<dbReference type="Gene3D" id="1.20.1280.50">
    <property type="match status" value="1"/>
</dbReference>
<dbReference type="InterPro" id="IPR036047">
    <property type="entry name" value="F-box-like_dom_sf"/>
</dbReference>
<dbReference type="InterPro" id="IPR001810">
    <property type="entry name" value="F-box_dom"/>
</dbReference>
<dbReference type="InterPro" id="IPR009976">
    <property type="entry name" value="Sec10-like"/>
</dbReference>
<dbReference type="InterPro" id="IPR048627">
    <property type="entry name" value="Sec10_HB"/>
</dbReference>
<dbReference type="PANTHER" id="PTHR12100:SF1">
    <property type="entry name" value="RECYCLIN-1"/>
    <property type="match status" value="1"/>
</dbReference>
<dbReference type="PANTHER" id="PTHR12100">
    <property type="entry name" value="SEC10"/>
    <property type="match status" value="1"/>
</dbReference>
<dbReference type="Pfam" id="PF12937">
    <property type="entry name" value="F-box-like"/>
    <property type="match status" value="1"/>
</dbReference>
<dbReference type="Pfam" id="PF07393">
    <property type="entry name" value="Sec10_HB"/>
    <property type="match status" value="1"/>
</dbReference>
<dbReference type="SMART" id="SM00256">
    <property type="entry name" value="FBOX"/>
    <property type="match status" value="1"/>
</dbReference>
<dbReference type="SUPFAM" id="SSF81383">
    <property type="entry name" value="F-box domain"/>
    <property type="match status" value="1"/>
</dbReference>
<accession>O74854</accession>
<protein>
    <recommendedName>
        <fullName>F-box protein pof6</fullName>
    </recommendedName>
</protein>
<comment type="function">
    <text evidence="2">Together with skp1, essential for septum processing and cell separation.</text>
</comment>
<comment type="subunit">
    <text evidence="2 3 4">Interacts with skp1. Forms a complex with pof6 and skp1.</text>
</comment>
<comment type="interaction">
    <interactant intactId="EBI-1185526">
        <id>O74854</id>
    </interactant>
    <interactant intactId="EBI-1172248">
        <id>Q9Y709</id>
        <label>skp1</label>
    </interactant>
    <organismsDiffer>false</organismsDiffer>
    <experiments>4</experiments>
</comment>
<comment type="subcellular location">
    <subcellularLocation>
        <location>Cytoplasm</location>
    </subcellularLocation>
    <subcellularLocation>
        <location>Nucleus</location>
    </subcellularLocation>
    <text>Constantly expressed throughout the cell cycle. Expressed in nucleus except the nucleolus and is localized at cell tips on both sides of the septum in septated cells.</text>
</comment>